<evidence type="ECO:0000255" key="1">
    <source>
        <dbReference type="HAMAP-Rule" id="MF_00017"/>
    </source>
</evidence>
<gene>
    <name evidence="1" type="primary">recR</name>
    <name type="ordered locus">FTA_1500</name>
</gene>
<accession>A7NDC2</accession>
<reference key="1">
    <citation type="journal article" date="2009" name="PLoS ONE">
        <title>Complete genome sequence of Francisella tularensis subspecies holarctica FTNF002-00.</title>
        <authorList>
            <person name="Barabote R.D."/>
            <person name="Xie G."/>
            <person name="Brettin T.S."/>
            <person name="Hinrichs S.H."/>
            <person name="Fey P.D."/>
            <person name="Jay J.J."/>
            <person name="Engle J.L."/>
            <person name="Godbole S.D."/>
            <person name="Noronha J.M."/>
            <person name="Scheuermann R.H."/>
            <person name="Zhou L.W."/>
            <person name="Lion C."/>
            <person name="Dempsey M.P."/>
        </authorList>
    </citation>
    <scope>NUCLEOTIDE SEQUENCE [LARGE SCALE GENOMIC DNA]</scope>
    <source>
        <strain>FTNF002-00 / FTA</strain>
    </source>
</reference>
<proteinExistence type="inferred from homology"/>
<organism>
    <name type="scientific">Francisella tularensis subsp. holarctica (strain FTNF002-00 / FTA)</name>
    <dbReference type="NCBI Taxonomy" id="458234"/>
    <lineage>
        <taxon>Bacteria</taxon>
        <taxon>Pseudomonadati</taxon>
        <taxon>Pseudomonadota</taxon>
        <taxon>Gammaproteobacteria</taxon>
        <taxon>Thiotrichales</taxon>
        <taxon>Francisellaceae</taxon>
        <taxon>Francisella</taxon>
    </lineage>
</organism>
<feature type="chain" id="PRO_1000001541" description="Recombination protein RecR">
    <location>
        <begin position="1"/>
        <end position="200"/>
    </location>
</feature>
<feature type="domain" description="Toprim" evidence="1">
    <location>
        <begin position="83"/>
        <end position="177"/>
    </location>
</feature>
<feature type="zinc finger region" description="C4-type" evidence="1">
    <location>
        <begin position="60"/>
        <end position="75"/>
    </location>
</feature>
<keyword id="KW-0227">DNA damage</keyword>
<keyword id="KW-0233">DNA recombination</keyword>
<keyword id="KW-0234">DNA repair</keyword>
<keyword id="KW-0479">Metal-binding</keyword>
<keyword id="KW-0862">Zinc</keyword>
<keyword id="KW-0863">Zinc-finger</keyword>
<sequence>MTSKIFSPKISAVIESLRKLPTIGKKSSQRLALYLLDKSPETAIAIANSLLDATANIKKCVYCQALTEDDVCNICSNTNRDDTKLCIIESMLDMIAIEEAGIYRGKYFVLNGRISPLDGIGPSELKLDILQQIIADRKIDEVILAISPTVEGETTAHFISQMIAKDIKISRIGFGVPFGGELEYLDQQTLLHAFNTRTNI</sequence>
<dbReference type="EMBL" id="CP000803">
    <property type="protein sequence ID" value="ABU61975.1"/>
    <property type="molecule type" value="Genomic_DNA"/>
</dbReference>
<dbReference type="RefSeq" id="WP_003016683.1">
    <property type="nucleotide sequence ID" value="NC_009749.1"/>
</dbReference>
<dbReference type="SMR" id="A7NDC2"/>
<dbReference type="KEGG" id="fta:FTA_1500"/>
<dbReference type="HOGENOM" id="CLU_060739_1_2_6"/>
<dbReference type="GO" id="GO:0003677">
    <property type="term" value="F:DNA binding"/>
    <property type="evidence" value="ECO:0007669"/>
    <property type="project" value="UniProtKB-UniRule"/>
</dbReference>
<dbReference type="GO" id="GO:0008270">
    <property type="term" value="F:zinc ion binding"/>
    <property type="evidence" value="ECO:0007669"/>
    <property type="project" value="UniProtKB-KW"/>
</dbReference>
<dbReference type="GO" id="GO:0006310">
    <property type="term" value="P:DNA recombination"/>
    <property type="evidence" value="ECO:0007669"/>
    <property type="project" value="UniProtKB-UniRule"/>
</dbReference>
<dbReference type="GO" id="GO:0006281">
    <property type="term" value="P:DNA repair"/>
    <property type="evidence" value="ECO:0007669"/>
    <property type="project" value="UniProtKB-UniRule"/>
</dbReference>
<dbReference type="CDD" id="cd01025">
    <property type="entry name" value="TOPRIM_recR"/>
    <property type="match status" value="1"/>
</dbReference>
<dbReference type="Gene3D" id="3.40.1360.10">
    <property type="match status" value="1"/>
</dbReference>
<dbReference type="Gene3D" id="6.10.250.240">
    <property type="match status" value="1"/>
</dbReference>
<dbReference type="Gene3D" id="1.10.8.420">
    <property type="entry name" value="RecR Domain 1"/>
    <property type="match status" value="1"/>
</dbReference>
<dbReference type="HAMAP" id="MF_00017">
    <property type="entry name" value="RecR"/>
    <property type="match status" value="1"/>
</dbReference>
<dbReference type="InterPro" id="IPR000093">
    <property type="entry name" value="DNA_Rcmb_RecR"/>
</dbReference>
<dbReference type="InterPro" id="IPR023627">
    <property type="entry name" value="Rcmb_RecR"/>
</dbReference>
<dbReference type="InterPro" id="IPR015967">
    <property type="entry name" value="Rcmb_RecR_Znf"/>
</dbReference>
<dbReference type="InterPro" id="IPR006171">
    <property type="entry name" value="TOPRIM_dom"/>
</dbReference>
<dbReference type="InterPro" id="IPR034137">
    <property type="entry name" value="TOPRIM_RecR"/>
</dbReference>
<dbReference type="NCBIfam" id="TIGR00615">
    <property type="entry name" value="recR"/>
    <property type="match status" value="1"/>
</dbReference>
<dbReference type="PANTHER" id="PTHR30446">
    <property type="entry name" value="RECOMBINATION PROTEIN RECR"/>
    <property type="match status" value="1"/>
</dbReference>
<dbReference type="PANTHER" id="PTHR30446:SF0">
    <property type="entry name" value="RECOMBINATION PROTEIN RECR"/>
    <property type="match status" value="1"/>
</dbReference>
<dbReference type="Pfam" id="PF21175">
    <property type="entry name" value="RecR_C"/>
    <property type="match status" value="1"/>
</dbReference>
<dbReference type="Pfam" id="PF21176">
    <property type="entry name" value="RecR_HhH"/>
    <property type="match status" value="1"/>
</dbReference>
<dbReference type="Pfam" id="PF02132">
    <property type="entry name" value="RecR_ZnF"/>
    <property type="match status" value="1"/>
</dbReference>
<dbReference type="Pfam" id="PF13662">
    <property type="entry name" value="Toprim_4"/>
    <property type="match status" value="1"/>
</dbReference>
<dbReference type="SMART" id="SM00493">
    <property type="entry name" value="TOPRIM"/>
    <property type="match status" value="1"/>
</dbReference>
<dbReference type="SUPFAM" id="SSF111304">
    <property type="entry name" value="Recombination protein RecR"/>
    <property type="match status" value="1"/>
</dbReference>
<dbReference type="PROSITE" id="PS01300">
    <property type="entry name" value="RECR"/>
    <property type="match status" value="1"/>
</dbReference>
<dbReference type="PROSITE" id="PS50880">
    <property type="entry name" value="TOPRIM"/>
    <property type="match status" value="1"/>
</dbReference>
<protein>
    <recommendedName>
        <fullName evidence="1">Recombination protein RecR</fullName>
    </recommendedName>
</protein>
<comment type="function">
    <text evidence="1">May play a role in DNA repair. It seems to be involved in an RecBC-independent recombinational process of DNA repair. It may act with RecF and RecO.</text>
</comment>
<comment type="similarity">
    <text evidence="1">Belongs to the RecR family.</text>
</comment>
<name>RECR_FRATF</name>